<comment type="function">
    <text evidence="1">Component of the mitochondrial ribosome (mitoribosome), a dedicated translation machinery responsible for the synthesis of mitochondrial genome-encoded proteins, including at least some of the essential transmembrane subunits of the mitochondrial respiratory chain. The mitoribosomes are attached to the mitochondrial inner membrane and translation products are cotranslationally integrated into the membrane. mL61 is not essential in cells grown at 30 degrees Celsius but is required for mitochondrial translation in cells grown at 18 degrees Celsius.</text>
</comment>
<comment type="subunit">
    <text evidence="1">Component of the mitochondrial large ribosomal subunit (mt-LSU). Mature yeast 74S mitochondrial ribosomes consist of a small (37S) and a large (54S) subunit. The 37S small subunit contains a 15S ribosomal RNA (15S mt-rRNA) and at least 32 different proteins. The 54S large subunit contains a 21S rRNA (21S mt-rRNA) and at least 45 different proteins.</text>
</comment>
<comment type="subcellular location">
    <subcellularLocation>
        <location evidence="1">Mitochondrion</location>
    </subcellularLocation>
</comment>
<comment type="similarity">
    <text evidence="3">Belongs to the mitochondrion-specific ribosomal protein mL61 family.</text>
</comment>
<protein>
    <recommendedName>
        <fullName evidence="3">Large ribosomal subunit protein mL61</fullName>
    </recommendedName>
    <alternativeName>
        <fullName>Probable 54S ribosomal protein MRP49, mitochondrial</fullName>
    </alternativeName>
</protein>
<sequence length="135" mass="15308">MSSIGGKLQKSLHKIRAGALGIPLPKHIQEVSIQYSLDSRLGHMGAKKFVKECLPSLYYNNYGLKFNVNHRLPNDQTPTFSIISNNKVIYSYDMRSKQLETISSDIQKALKELHHESSPENIKEAHKQDYSPPSN</sequence>
<name>RM49_SCHPO</name>
<keyword id="KW-0496">Mitochondrion</keyword>
<keyword id="KW-1185">Reference proteome</keyword>
<keyword id="KW-0687">Ribonucleoprotein</keyword>
<keyword id="KW-0689">Ribosomal protein</keyword>
<accession>C6Y4D2</accession>
<proteinExistence type="inferred from homology"/>
<gene>
    <name type="primary">mrp49</name>
    <name type="ORF">SPCC1442.19</name>
</gene>
<reference key="1">
    <citation type="journal article" date="2002" name="Nature">
        <title>The genome sequence of Schizosaccharomyces pombe.</title>
        <authorList>
            <person name="Wood V."/>
            <person name="Gwilliam R."/>
            <person name="Rajandream M.A."/>
            <person name="Lyne M.H."/>
            <person name="Lyne R."/>
            <person name="Stewart A."/>
            <person name="Sgouros J.G."/>
            <person name="Peat N."/>
            <person name="Hayles J."/>
            <person name="Baker S.G."/>
            <person name="Basham D."/>
            <person name="Bowman S."/>
            <person name="Brooks K."/>
            <person name="Brown D."/>
            <person name="Brown S."/>
            <person name="Chillingworth T."/>
            <person name="Churcher C.M."/>
            <person name="Collins M."/>
            <person name="Connor R."/>
            <person name="Cronin A."/>
            <person name="Davis P."/>
            <person name="Feltwell T."/>
            <person name="Fraser A."/>
            <person name="Gentles S."/>
            <person name="Goble A."/>
            <person name="Hamlin N."/>
            <person name="Harris D.E."/>
            <person name="Hidalgo J."/>
            <person name="Hodgson G."/>
            <person name="Holroyd S."/>
            <person name="Hornsby T."/>
            <person name="Howarth S."/>
            <person name="Huckle E.J."/>
            <person name="Hunt S."/>
            <person name="Jagels K."/>
            <person name="James K.D."/>
            <person name="Jones L."/>
            <person name="Jones M."/>
            <person name="Leather S."/>
            <person name="McDonald S."/>
            <person name="McLean J."/>
            <person name="Mooney P."/>
            <person name="Moule S."/>
            <person name="Mungall K.L."/>
            <person name="Murphy L.D."/>
            <person name="Niblett D."/>
            <person name="Odell C."/>
            <person name="Oliver K."/>
            <person name="O'Neil S."/>
            <person name="Pearson D."/>
            <person name="Quail M.A."/>
            <person name="Rabbinowitsch E."/>
            <person name="Rutherford K.M."/>
            <person name="Rutter S."/>
            <person name="Saunders D."/>
            <person name="Seeger K."/>
            <person name="Sharp S."/>
            <person name="Skelton J."/>
            <person name="Simmonds M.N."/>
            <person name="Squares R."/>
            <person name="Squares S."/>
            <person name="Stevens K."/>
            <person name="Taylor K."/>
            <person name="Taylor R.G."/>
            <person name="Tivey A."/>
            <person name="Walsh S.V."/>
            <person name="Warren T."/>
            <person name="Whitehead S."/>
            <person name="Woodward J.R."/>
            <person name="Volckaert G."/>
            <person name="Aert R."/>
            <person name="Robben J."/>
            <person name="Grymonprez B."/>
            <person name="Weltjens I."/>
            <person name="Vanstreels E."/>
            <person name="Rieger M."/>
            <person name="Schaefer M."/>
            <person name="Mueller-Auer S."/>
            <person name="Gabel C."/>
            <person name="Fuchs M."/>
            <person name="Duesterhoeft A."/>
            <person name="Fritzc C."/>
            <person name="Holzer E."/>
            <person name="Moestl D."/>
            <person name="Hilbert H."/>
            <person name="Borzym K."/>
            <person name="Langer I."/>
            <person name="Beck A."/>
            <person name="Lehrach H."/>
            <person name="Reinhardt R."/>
            <person name="Pohl T.M."/>
            <person name="Eger P."/>
            <person name="Zimmermann W."/>
            <person name="Wedler H."/>
            <person name="Wambutt R."/>
            <person name="Purnelle B."/>
            <person name="Goffeau A."/>
            <person name="Cadieu E."/>
            <person name="Dreano S."/>
            <person name="Gloux S."/>
            <person name="Lelaure V."/>
            <person name="Mottier S."/>
            <person name="Galibert F."/>
            <person name="Aves S.J."/>
            <person name="Xiang Z."/>
            <person name="Hunt C."/>
            <person name="Moore K."/>
            <person name="Hurst S.M."/>
            <person name="Lucas M."/>
            <person name="Rochet M."/>
            <person name="Gaillardin C."/>
            <person name="Tallada V.A."/>
            <person name="Garzon A."/>
            <person name="Thode G."/>
            <person name="Daga R.R."/>
            <person name="Cruzado L."/>
            <person name="Jimenez J."/>
            <person name="Sanchez M."/>
            <person name="del Rey F."/>
            <person name="Benito J."/>
            <person name="Dominguez A."/>
            <person name="Revuelta J.L."/>
            <person name="Moreno S."/>
            <person name="Armstrong J."/>
            <person name="Forsburg S.L."/>
            <person name="Cerutti L."/>
            <person name="Lowe T."/>
            <person name="McCombie W.R."/>
            <person name="Paulsen I."/>
            <person name="Potashkin J."/>
            <person name="Shpakovski G.V."/>
            <person name="Ussery D."/>
            <person name="Barrell B.G."/>
            <person name="Nurse P."/>
        </authorList>
    </citation>
    <scope>NUCLEOTIDE SEQUENCE [LARGE SCALE GENOMIC DNA]</scope>
    <source>
        <strain>972 / ATCC 24843</strain>
    </source>
</reference>
<evidence type="ECO:0000250" key="1">
    <source>
        <dbReference type="UniProtKB" id="P32388"/>
    </source>
</evidence>
<evidence type="ECO:0000256" key="2">
    <source>
        <dbReference type="SAM" id="MobiDB-lite"/>
    </source>
</evidence>
<evidence type="ECO:0000305" key="3"/>
<feature type="chain" id="PRO_0000389113" description="Large ribosomal subunit protein mL61">
    <location>
        <begin position="1"/>
        <end position="135"/>
    </location>
</feature>
<feature type="region of interest" description="Disordered" evidence="2">
    <location>
        <begin position="114"/>
        <end position="135"/>
    </location>
</feature>
<feature type="compositionally biased region" description="Basic and acidic residues" evidence="2">
    <location>
        <begin position="114"/>
        <end position="129"/>
    </location>
</feature>
<organism>
    <name type="scientific">Schizosaccharomyces pombe (strain 972 / ATCC 24843)</name>
    <name type="common">Fission yeast</name>
    <dbReference type="NCBI Taxonomy" id="284812"/>
    <lineage>
        <taxon>Eukaryota</taxon>
        <taxon>Fungi</taxon>
        <taxon>Dikarya</taxon>
        <taxon>Ascomycota</taxon>
        <taxon>Taphrinomycotina</taxon>
        <taxon>Schizosaccharomycetes</taxon>
        <taxon>Schizosaccharomycetales</taxon>
        <taxon>Schizosaccharomycetaceae</taxon>
        <taxon>Schizosaccharomyces</taxon>
    </lineage>
</organism>
<dbReference type="EMBL" id="CU329672">
    <property type="protein sequence ID" value="CBA11519.1"/>
    <property type="molecule type" value="Genomic_DNA"/>
</dbReference>
<dbReference type="RefSeq" id="XP_002788951.1">
    <property type="nucleotide sequence ID" value="XM_002788905.2"/>
</dbReference>
<dbReference type="SMR" id="C6Y4D2"/>
<dbReference type="BioGRID" id="1028656">
    <property type="interactions" value="3"/>
</dbReference>
<dbReference type="ComplexPortal" id="CPX-10323">
    <property type="entry name" value="54S mitochondrial large ribosomal subunit"/>
</dbReference>
<dbReference type="FunCoup" id="C6Y4D2">
    <property type="interactions" value="21"/>
</dbReference>
<dbReference type="STRING" id="284812.C6Y4D2"/>
<dbReference type="PaxDb" id="4896-SPCC1442.19.1"/>
<dbReference type="EnsemblFungi" id="SPCC1442.19.1">
    <property type="protein sequence ID" value="SPCC1442.19.1:pep"/>
    <property type="gene ID" value="SPCC1442.19"/>
</dbReference>
<dbReference type="PomBase" id="SPCC1442.19">
    <property type="gene designation" value="mrp49"/>
</dbReference>
<dbReference type="VEuPathDB" id="FungiDB:SPCC1442.19"/>
<dbReference type="HOGENOM" id="CLU_2028085_0_0_1"/>
<dbReference type="InParanoid" id="C6Y4D2"/>
<dbReference type="OMA" id="HNEHIKF"/>
<dbReference type="PRO" id="PR:C6Y4D2"/>
<dbReference type="Proteomes" id="UP000002485">
    <property type="component" value="Chromosome III"/>
</dbReference>
<dbReference type="GO" id="GO:0005762">
    <property type="term" value="C:mitochondrial large ribosomal subunit"/>
    <property type="evidence" value="ECO:0000266"/>
    <property type="project" value="PomBase"/>
</dbReference>
<dbReference type="GO" id="GO:0003735">
    <property type="term" value="F:structural constituent of ribosome"/>
    <property type="evidence" value="ECO:0007669"/>
    <property type="project" value="InterPro"/>
</dbReference>
<dbReference type="GO" id="GO:0032543">
    <property type="term" value="P:mitochondrial translation"/>
    <property type="evidence" value="ECO:0000266"/>
    <property type="project" value="PomBase"/>
</dbReference>
<dbReference type="InterPro" id="IPR040049">
    <property type="entry name" value="Ribosomal_mS25/mL61"/>
</dbReference>
<dbReference type="PANTHER" id="PTHR13274">
    <property type="entry name" value="MITOCHONDRIAL RIBOSOMAL PROTEIN S25"/>
    <property type="match status" value="1"/>
</dbReference>
<dbReference type="PANTHER" id="PTHR13274:SF2">
    <property type="entry name" value="SMALL RIBOSOMAL SUBUNIT PROTEIN MS25"/>
    <property type="match status" value="1"/>
</dbReference>